<dbReference type="EC" id="6.3.2.9" evidence="1"/>
<dbReference type="EMBL" id="CP000437">
    <property type="protein sequence ID" value="ABI83356.1"/>
    <property type="molecule type" value="Genomic_DNA"/>
</dbReference>
<dbReference type="RefSeq" id="WP_003017010.1">
    <property type="nucleotide sequence ID" value="NC_017463.1"/>
</dbReference>
<dbReference type="SMR" id="Q0BKM8"/>
<dbReference type="KEGG" id="fth:FTH_1561"/>
<dbReference type="UniPathway" id="UPA00219"/>
<dbReference type="GO" id="GO:0005737">
    <property type="term" value="C:cytoplasm"/>
    <property type="evidence" value="ECO:0007669"/>
    <property type="project" value="UniProtKB-SubCell"/>
</dbReference>
<dbReference type="GO" id="GO:0005524">
    <property type="term" value="F:ATP binding"/>
    <property type="evidence" value="ECO:0007669"/>
    <property type="project" value="UniProtKB-UniRule"/>
</dbReference>
<dbReference type="GO" id="GO:0008764">
    <property type="term" value="F:UDP-N-acetylmuramoylalanine-D-glutamate ligase activity"/>
    <property type="evidence" value="ECO:0007669"/>
    <property type="project" value="UniProtKB-UniRule"/>
</dbReference>
<dbReference type="GO" id="GO:0051301">
    <property type="term" value="P:cell division"/>
    <property type="evidence" value="ECO:0007669"/>
    <property type="project" value="UniProtKB-KW"/>
</dbReference>
<dbReference type="GO" id="GO:0071555">
    <property type="term" value="P:cell wall organization"/>
    <property type="evidence" value="ECO:0007669"/>
    <property type="project" value="UniProtKB-KW"/>
</dbReference>
<dbReference type="GO" id="GO:0009252">
    <property type="term" value="P:peptidoglycan biosynthetic process"/>
    <property type="evidence" value="ECO:0007669"/>
    <property type="project" value="UniProtKB-UniRule"/>
</dbReference>
<dbReference type="GO" id="GO:0008360">
    <property type="term" value="P:regulation of cell shape"/>
    <property type="evidence" value="ECO:0007669"/>
    <property type="project" value="UniProtKB-KW"/>
</dbReference>
<dbReference type="Gene3D" id="3.90.190.20">
    <property type="entry name" value="Mur ligase, C-terminal domain"/>
    <property type="match status" value="1"/>
</dbReference>
<dbReference type="Gene3D" id="3.40.1190.10">
    <property type="entry name" value="Mur-like, catalytic domain"/>
    <property type="match status" value="1"/>
</dbReference>
<dbReference type="HAMAP" id="MF_00639">
    <property type="entry name" value="MurD"/>
    <property type="match status" value="1"/>
</dbReference>
<dbReference type="InterPro" id="IPR036565">
    <property type="entry name" value="Mur-like_cat_sf"/>
</dbReference>
<dbReference type="InterPro" id="IPR004101">
    <property type="entry name" value="Mur_ligase_C"/>
</dbReference>
<dbReference type="InterPro" id="IPR036615">
    <property type="entry name" value="Mur_ligase_C_dom_sf"/>
</dbReference>
<dbReference type="InterPro" id="IPR013221">
    <property type="entry name" value="Mur_ligase_cen"/>
</dbReference>
<dbReference type="InterPro" id="IPR005762">
    <property type="entry name" value="MurD"/>
</dbReference>
<dbReference type="NCBIfam" id="TIGR01087">
    <property type="entry name" value="murD"/>
    <property type="match status" value="1"/>
</dbReference>
<dbReference type="PANTHER" id="PTHR43692">
    <property type="entry name" value="UDP-N-ACETYLMURAMOYLALANINE--D-GLUTAMATE LIGASE"/>
    <property type="match status" value="1"/>
</dbReference>
<dbReference type="PANTHER" id="PTHR43692:SF1">
    <property type="entry name" value="UDP-N-ACETYLMURAMOYLALANINE--D-GLUTAMATE LIGASE"/>
    <property type="match status" value="1"/>
</dbReference>
<dbReference type="Pfam" id="PF02875">
    <property type="entry name" value="Mur_ligase_C"/>
    <property type="match status" value="1"/>
</dbReference>
<dbReference type="Pfam" id="PF08245">
    <property type="entry name" value="Mur_ligase_M"/>
    <property type="match status" value="1"/>
</dbReference>
<dbReference type="SUPFAM" id="SSF53623">
    <property type="entry name" value="MurD-like peptide ligases, catalytic domain"/>
    <property type="match status" value="1"/>
</dbReference>
<dbReference type="SUPFAM" id="SSF53244">
    <property type="entry name" value="MurD-like peptide ligases, peptide-binding domain"/>
    <property type="match status" value="1"/>
</dbReference>
<gene>
    <name evidence="1" type="primary">murD</name>
    <name type="ordered locus">FTH_1561</name>
</gene>
<protein>
    <recommendedName>
        <fullName evidence="1">UDP-N-acetylmuramoylalanine--D-glutamate ligase</fullName>
        <ecNumber evidence="1">6.3.2.9</ecNumber>
    </recommendedName>
    <alternativeName>
        <fullName evidence="1">D-glutamic acid-adding enzyme</fullName>
    </alternativeName>
    <alternativeName>
        <fullName evidence="1">UDP-N-acetylmuramoyl-L-alanyl-D-glutamate synthetase</fullName>
    </alternativeName>
</protein>
<comment type="function">
    <text evidence="1">Cell wall formation. Catalyzes the addition of glutamate to the nucleotide precursor UDP-N-acetylmuramoyl-L-alanine (UMA).</text>
</comment>
<comment type="catalytic activity">
    <reaction evidence="1">
        <text>UDP-N-acetyl-alpha-D-muramoyl-L-alanine + D-glutamate + ATP = UDP-N-acetyl-alpha-D-muramoyl-L-alanyl-D-glutamate + ADP + phosphate + H(+)</text>
        <dbReference type="Rhea" id="RHEA:16429"/>
        <dbReference type="ChEBI" id="CHEBI:15378"/>
        <dbReference type="ChEBI" id="CHEBI:29986"/>
        <dbReference type="ChEBI" id="CHEBI:30616"/>
        <dbReference type="ChEBI" id="CHEBI:43474"/>
        <dbReference type="ChEBI" id="CHEBI:83898"/>
        <dbReference type="ChEBI" id="CHEBI:83900"/>
        <dbReference type="ChEBI" id="CHEBI:456216"/>
        <dbReference type="EC" id="6.3.2.9"/>
    </reaction>
</comment>
<comment type="pathway">
    <text evidence="1">Cell wall biogenesis; peptidoglycan biosynthesis.</text>
</comment>
<comment type="subcellular location">
    <subcellularLocation>
        <location evidence="1">Cytoplasm</location>
    </subcellularLocation>
</comment>
<comment type="similarity">
    <text evidence="1">Belongs to the MurCDEF family.</text>
</comment>
<keyword id="KW-0067">ATP-binding</keyword>
<keyword id="KW-0131">Cell cycle</keyword>
<keyword id="KW-0132">Cell division</keyword>
<keyword id="KW-0133">Cell shape</keyword>
<keyword id="KW-0961">Cell wall biogenesis/degradation</keyword>
<keyword id="KW-0963">Cytoplasm</keyword>
<keyword id="KW-0436">Ligase</keyword>
<keyword id="KW-0547">Nucleotide-binding</keyword>
<keyword id="KW-0573">Peptidoglycan synthesis</keyword>
<organism>
    <name type="scientific">Francisella tularensis subsp. holarctica (strain OSU18)</name>
    <dbReference type="NCBI Taxonomy" id="393011"/>
    <lineage>
        <taxon>Bacteria</taxon>
        <taxon>Pseudomonadati</taxon>
        <taxon>Pseudomonadota</taxon>
        <taxon>Gammaproteobacteria</taxon>
        <taxon>Thiotrichales</taxon>
        <taxon>Francisellaceae</taxon>
        <taxon>Francisella</taxon>
    </lineage>
</organism>
<proteinExistence type="inferred from homology"/>
<name>MURD_FRATO</name>
<reference key="1">
    <citation type="journal article" date="2006" name="J. Bacteriol.">
        <title>Chromosome rearrangement and diversification of Francisella tularensis revealed by the type B (OSU18) genome sequence.</title>
        <authorList>
            <person name="Petrosino J.F."/>
            <person name="Xiang Q."/>
            <person name="Karpathy S.E."/>
            <person name="Jiang H."/>
            <person name="Yerrapragada S."/>
            <person name="Liu Y."/>
            <person name="Gioia J."/>
            <person name="Hemphill L."/>
            <person name="Gonzalez A."/>
            <person name="Raghavan T.M."/>
            <person name="Uzman A."/>
            <person name="Fox G.E."/>
            <person name="Highlander S."/>
            <person name="Reichard M."/>
            <person name="Morton R.J."/>
            <person name="Clinkenbeard K.D."/>
            <person name="Weinstock G.M."/>
        </authorList>
    </citation>
    <scope>NUCLEOTIDE SEQUENCE [LARGE SCALE GENOMIC DNA]</scope>
    <source>
        <strain>OSU18</strain>
    </source>
</reference>
<evidence type="ECO:0000255" key="1">
    <source>
        <dbReference type="HAMAP-Rule" id="MF_00639"/>
    </source>
</evidence>
<feature type="chain" id="PRO_0000301425" description="UDP-N-acetylmuramoylalanine--D-glutamate ligase">
    <location>
        <begin position="1"/>
        <end position="416"/>
    </location>
</feature>
<feature type="binding site" evidence="1">
    <location>
        <begin position="104"/>
        <end position="110"/>
    </location>
    <ligand>
        <name>ATP</name>
        <dbReference type="ChEBI" id="CHEBI:30616"/>
    </ligand>
</feature>
<sequence length="416" mass="46779">MFSFYFNDNKITKLLMVGYGSTGKSVCDFLANFIDITVDISQNDDEFVNYDLNSYDLITVSPGIPLNKSPYRALTKFKDKIVSDIDIFYQYIKDTKAKTIAVTGSNGKSTVVTMTDFVLKDLGYKSILVGNIGTPALNKIGEKFDYCVVEVSSFQINLFNCVRFDLGCIINVSPDHLDRYQNFEQYKQSKLNLAKFSNDFFVYDVHNGIKYAGEYQIIRGAIYRNSTKLLDIVETKLFGEHNLENIIVVLNILDRLGLDINQAIDSIKKFKGLEHRCKIVKKVNGTTYINDSKGTNVGATIAALNSITNSKNIILLLGGVAKGGDFSLMIKSLDKYVKYVYIYGADKEYIESYIKGYCKYQLCNNMKQAFELASQKANSNEIVLLSPACASFDEFSGYAQRGEVFQNLVAQLEQKS</sequence>
<accession>Q0BKM8</accession>